<protein>
    <recommendedName>
        <fullName>Ferritin BfrB</fullName>
        <ecNumber>1.16.3.1</ecNumber>
    </recommendedName>
    <alternativeName>
        <fullName>Bacterioferritin</fullName>
    </alternativeName>
    <alternativeName>
        <fullName>Non-heme ferritin Ftn</fullName>
    </alternativeName>
    <alternativeName>
        <fullName>Nox19</fullName>
    </alternativeName>
</protein>
<sequence>MTEYEGPKTKFHALMQEQIHNEFTAAQQYVAIAVYFDSEDLPQLAKHFYSQAVEERNHAMMLVQHLLDRDLRVEIPGVDTVRNQFDRPREALALALDQERTVTDQVGRLTAVARDEGDFLGEQFMQWFLQEQIEEVALMATLVRVADRAGANLFELENFVAREVDVAPAASGAPHAAGGRL</sequence>
<organism>
    <name type="scientific">Mycobacterium tuberculosis (strain ATCC 35801 / TMC 107 / Erdman)</name>
    <dbReference type="NCBI Taxonomy" id="652616"/>
    <lineage>
        <taxon>Bacteria</taxon>
        <taxon>Bacillati</taxon>
        <taxon>Actinomycetota</taxon>
        <taxon>Actinomycetes</taxon>
        <taxon>Mycobacteriales</taxon>
        <taxon>Mycobacteriaceae</taxon>
        <taxon>Mycobacterium</taxon>
        <taxon>Mycobacterium tuberculosis complex</taxon>
    </lineage>
</organism>
<proteinExistence type="evidence at transcript level"/>
<keyword id="KW-0408">Iron</keyword>
<keyword id="KW-0409">Iron storage</keyword>
<keyword id="KW-0479">Metal-binding</keyword>
<keyword id="KW-0560">Oxidoreductase</keyword>
<feature type="chain" id="PRO_0000422687" description="Ferritin BfrB">
    <location>
        <begin position="1"/>
        <end position="181"/>
    </location>
</feature>
<feature type="domain" description="Ferritin-like diiron" evidence="2">
    <location>
        <begin position="15"/>
        <end position="150"/>
    </location>
</feature>
<feature type="binding site" evidence="2">
    <location>
        <position position="22"/>
    </location>
    <ligand>
        <name>Fe cation</name>
        <dbReference type="ChEBI" id="CHEBI:24875"/>
        <label>1</label>
    </ligand>
</feature>
<feature type="binding site" evidence="2">
    <location>
        <position position="55"/>
    </location>
    <ligand>
        <name>Fe cation</name>
        <dbReference type="ChEBI" id="CHEBI:24875"/>
        <label>1</label>
    </ligand>
</feature>
<feature type="binding site" evidence="2">
    <location>
        <position position="55"/>
    </location>
    <ligand>
        <name>Fe cation</name>
        <dbReference type="ChEBI" id="CHEBI:24875"/>
        <label>2</label>
    </ligand>
</feature>
<feature type="binding site" evidence="2">
    <location>
        <position position="58"/>
    </location>
    <ligand>
        <name>Fe cation</name>
        <dbReference type="ChEBI" id="CHEBI:24875"/>
        <label>1</label>
    </ligand>
</feature>
<feature type="binding site" evidence="2">
    <location>
        <position position="99"/>
    </location>
    <ligand>
        <name>Fe cation</name>
        <dbReference type="ChEBI" id="CHEBI:24875"/>
        <label>2</label>
    </ligand>
</feature>
<feature type="binding site" evidence="2">
    <location>
        <position position="132"/>
    </location>
    <ligand>
        <name>Fe cation</name>
        <dbReference type="ChEBI" id="CHEBI:24875"/>
        <label>2</label>
    </ligand>
</feature>
<comment type="function">
    <text evidence="1">Iron-storage protein that displays ferroxidase activity, catalyzing the oxidation of Fe(2+) ions into Fe(3+) ions, that can then be deposited as a ferric-oxide mineral core within the central cavity of the protein complex.</text>
</comment>
<comment type="catalytic activity">
    <reaction>
        <text>4 Fe(2+) + O2 + 4 H(+) = 4 Fe(3+) + 2 H2O</text>
        <dbReference type="Rhea" id="RHEA:11148"/>
        <dbReference type="ChEBI" id="CHEBI:15377"/>
        <dbReference type="ChEBI" id="CHEBI:15378"/>
        <dbReference type="ChEBI" id="CHEBI:15379"/>
        <dbReference type="ChEBI" id="CHEBI:29033"/>
        <dbReference type="ChEBI" id="CHEBI:29034"/>
        <dbReference type="EC" id="1.16.3.1"/>
    </reaction>
</comment>
<comment type="subunit">
    <text evidence="1">Homooligomer of 24 subunits that are packed together to form an approximately spherical molecule with a central cavity, in which large amounts of iron can be stored.</text>
</comment>
<comment type="induction">
    <text evidence="3">Repressed by Rip1, highly induced by metal chelator phenanthroline in the absence of Rip1.</text>
</comment>
<comment type="similarity">
    <text evidence="4">Belongs to the ferritin family. Prokaryotic subfamily.</text>
</comment>
<comment type="sequence caution" evidence="4">
    <conflict type="erroneous initiation">
        <sequence resource="EMBL-CDS" id="BAL67972"/>
    </conflict>
    <text>Truncated N-terminus.</text>
</comment>
<dbReference type="EC" id="1.16.3.1"/>
<dbReference type="EMBL" id="AP012340">
    <property type="protein sequence ID" value="BAL67972.1"/>
    <property type="status" value="ALT_INIT"/>
    <property type="molecule type" value="Genomic_DNA"/>
</dbReference>
<dbReference type="RefSeq" id="WP_003420920.1">
    <property type="nucleotide sequence ID" value="NZ_KK339488.1"/>
</dbReference>
<dbReference type="SMR" id="H8F1Z2"/>
<dbReference type="GeneID" id="45427842"/>
<dbReference type="KEGG" id="mtn:ERDMAN_4208"/>
<dbReference type="PATRIC" id="fig|652616.3.peg.4283"/>
<dbReference type="HOGENOM" id="CLU_065681_1_1_11"/>
<dbReference type="GO" id="GO:0005829">
    <property type="term" value="C:cytosol"/>
    <property type="evidence" value="ECO:0007669"/>
    <property type="project" value="TreeGrafter"/>
</dbReference>
<dbReference type="GO" id="GO:0008199">
    <property type="term" value="F:ferric iron binding"/>
    <property type="evidence" value="ECO:0007669"/>
    <property type="project" value="InterPro"/>
</dbReference>
<dbReference type="GO" id="GO:0008198">
    <property type="term" value="F:ferrous iron binding"/>
    <property type="evidence" value="ECO:0007669"/>
    <property type="project" value="TreeGrafter"/>
</dbReference>
<dbReference type="GO" id="GO:0004322">
    <property type="term" value="F:ferroxidase activity"/>
    <property type="evidence" value="ECO:0007669"/>
    <property type="project" value="UniProtKB-EC"/>
</dbReference>
<dbReference type="GO" id="GO:0006879">
    <property type="term" value="P:intracellular iron ion homeostasis"/>
    <property type="evidence" value="ECO:0007669"/>
    <property type="project" value="UniProtKB-KW"/>
</dbReference>
<dbReference type="GO" id="GO:0006826">
    <property type="term" value="P:iron ion transport"/>
    <property type="evidence" value="ECO:0007669"/>
    <property type="project" value="InterPro"/>
</dbReference>
<dbReference type="CDD" id="cd01055">
    <property type="entry name" value="Nonheme_Ferritin"/>
    <property type="match status" value="1"/>
</dbReference>
<dbReference type="FunFam" id="1.20.1260.10:FF:000021">
    <property type="entry name" value="Ferritin BfrB"/>
    <property type="match status" value="1"/>
</dbReference>
<dbReference type="Gene3D" id="1.20.1260.10">
    <property type="match status" value="1"/>
</dbReference>
<dbReference type="InterPro" id="IPR001519">
    <property type="entry name" value="Ferritin"/>
</dbReference>
<dbReference type="InterPro" id="IPR012347">
    <property type="entry name" value="Ferritin-like"/>
</dbReference>
<dbReference type="InterPro" id="IPR009040">
    <property type="entry name" value="Ferritin-like_diiron"/>
</dbReference>
<dbReference type="InterPro" id="IPR009078">
    <property type="entry name" value="Ferritin-like_SF"/>
</dbReference>
<dbReference type="InterPro" id="IPR008331">
    <property type="entry name" value="Ferritin_DPS_dom"/>
</dbReference>
<dbReference type="InterPro" id="IPR041719">
    <property type="entry name" value="Ferritin_prok"/>
</dbReference>
<dbReference type="PANTHER" id="PTHR11431:SF127">
    <property type="entry name" value="BACTERIAL NON-HEME FERRITIN"/>
    <property type="match status" value="1"/>
</dbReference>
<dbReference type="PANTHER" id="PTHR11431">
    <property type="entry name" value="FERRITIN"/>
    <property type="match status" value="1"/>
</dbReference>
<dbReference type="Pfam" id="PF00210">
    <property type="entry name" value="Ferritin"/>
    <property type="match status" value="1"/>
</dbReference>
<dbReference type="SUPFAM" id="SSF47240">
    <property type="entry name" value="Ferritin-like"/>
    <property type="match status" value="1"/>
</dbReference>
<dbReference type="PROSITE" id="PS50905">
    <property type="entry name" value="FERRITIN_LIKE"/>
    <property type="match status" value="1"/>
</dbReference>
<name>BFRB_MYCTE</name>
<accession>H8F1Z2</accession>
<evidence type="ECO:0000250" key="1"/>
<evidence type="ECO:0000255" key="2">
    <source>
        <dbReference type="PROSITE-ProRule" id="PRU00085"/>
    </source>
</evidence>
<evidence type="ECO:0000269" key="3">
    <source>
    </source>
</evidence>
<evidence type="ECO:0000305" key="4"/>
<reference key="1">
    <citation type="journal article" date="2012" name="J. Bacteriol.">
        <title>Complete annotated genome sequence of Mycobacterium tuberculosis Erdman.</title>
        <authorList>
            <person name="Miyoshi-Akiyama T."/>
            <person name="Matsumura K."/>
            <person name="Iwai H."/>
            <person name="Funatogawa K."/>
            <person name="Kirikae T."/>
        </authorList>
    </citation>
    <scope>NUCLEOTIDE SEQUENCE [LARGE SCALE GENOMIC DNA]</scope>
    <source>
        <strain>ATCC 35801 / TMC 107 / Erdman</strain>
    </source>
</reference>
<reference key="2">
    <citation type="journal article" date="2010" name="Mol. Microbiol.">
        <title>M. tuberculosis intramembrane protease Rip1 controls transcription through three anti-sigma factor substrates.</title>
        <authorList>
            <person name="Sklar J.G."/>
            <person name="Makinoshima H."/>
            <person name="Schneider J.S."/>
            <person name="Glickman M.S."/>
        </authorList>
    </citation>
    <scope>INDUCTION</scope>
    <source>
        <strain>ATCC 35801 / TMC 107 / Erdman</strain>
    </source>
</reference>
<gene>
    <name type="primary">bfrB</name>
    <name type="ordered locus">ERDMAN_4208</name>
</gene>